<name>RNH3_CHLPN</name>
<proteinExistence type="inferred from homology"/>
<dbReference type="EC" id="3.1.26.4"/>
<dbReference type="EMBL" id="AE001363">
    <property type="protein sequence ID" value="AAD19205.1"/>
    <property type="molecule type" value="Genomic_DNA"/>
</dbReference>
<dbReference type="EMBL" id="AE002161">
    <property type="protein sequence ID" value="AAF38581.1"/>
    <property type="molecule type" value="Genomic_DNA"/>
</dbReference>
<dbReference type="EMBL" id="BA000008">
    <property type="protein sequence ID" value="BAA99275.1"/>
    <property type="molecule type" value="Genomic_DNA"/>
</dbReference>
<dbReference type="EMBL" id="AE009440">
    <property type="protein sequence ID" value="AAP99040.1"/>
    <property type="molecule type" value="Genomic_DNA"/>
</dbReference>
<dbReference type="PIR" id="A86624">
    <property type="entry name" value="A86624"/>
</dbReference>
<dbReference type="PIR" id="C81538">
    <property type="entry name" value="C81538"/>
</dbReference>
<dbReference type="PIR" id="F72000">
    <property type="entry name" value="F72000"/>
</dbReference>
<dbReference type="RefSeq" id="NP_225262.1">
    <property type="nucleotide sequence ID" value="NC_000922.1"/>
</dbReference>
<dbReference type="RefSeq" id="WP_010883701.1">
    <property type="nucleotide sequence ID" value="NZ_LN847257.1"/>
</dbReference>
<dbReference type="SMR" id="Q9Z6J1"/>
<dbReference type="STRING" id="406984.CPK_ORF00493"/>
<dbReference type="GeneID" id="45051125"/>
<dbReference type="KEGG" id="cpa:CP_0782"/>
<dbReference type="KEGG" id="cpj:rnhB_2"/>
<dbReference type="KEGG" id="cpn:CPn_1068"/>
<dbReference type="KEGG" id="cpt:CpB1112"/>
<dbReference type="PATRIC" id="fig|115713.3.peg.1168"/>
<dbReference type="eggNOG" id="COG1039">
    <property type="taxonomic scope" value="Bacteria"/>
</dbReference>
<dbReference type="HOGENOM" id="CLU_059546_0_0_0"/>
<dbReference type="OrthoDB" id="9777935at2"/>
<dbReference type="Proteomes" id="UP000000583">
    <property type="component" value="Chromosome"/>
</dbReference>
<dbReference type="Proteomes" id="UP000000801">
    <property type="component" value="Chromosome"/>
</dbReference>
<dbReference type="GO" id="GO:0005737">
    <property type="term" value="C:cytoplasm"/>
    <property type="evidence" value="ECO:0007669"/>
    <property type="project" value="UniProtKB-SubCell"/>
</dbReference>
<dbReference type="GO" id="GO:0032299">
    <property type="term" value="C:ribonuclease H2 complex"/>
    <property type="evidence" value="ECO:0007669"/>
    <property type="project" value="TreeGrafter"/>
</dbReference>
<dbReference type="GO" id="GO:0000287">
    <property type="term" value="F:magnesium ion binding"/>
    <property type="evidence" value="ECO:0007669"/>
    <property type="project" value="UniProtKB-UniRule"/>
</dbReference>
<dbReference type="GO" id="GO:0003723">
    <property type="term" value="F:RNA binding"/>
    <property type="evidence" value="ECO:0007669"/>
    <property type="project" value="InterPro"/>
</dbReference>
<dbReference type="GO" id="GO:0004523">
    <property type="term" value="F:RNA-DNA hybrid ribonuclease activity"/>
    <property type="evidence" value="ECO:0007669"/>
    <property type="project" value="UniProtKB-UniRule"/>
</dbReference>
<dbReference type="GO" id="GO:0043137">
    <property type="term" value="P:DNA replication, removal of RNA primer"/>
    <property type="evidence" value="ECO:0007669"/>
    <property type="project" value="TreeGrafter"/>
</dbReference>
<dbReference type="GO" id="GO:0006298">
    <property type="term" value="P:mismatch repair"/>
    <property type="evidence" value="ECO:0007669"/>
    <property type="project" value="TreeGrafter"/>
</dbReference>
<dbReference type="CDD" id="cd06590">
    <property type="entry name" value="RNase_HII_bacteria_HIII_like"/>
    <property type="match status" value="1"/>
</dbReference>
<dbReference type="CDD" id="cd14796">
    <property type="entry name" value="RNAse_HIII_N"/>
    <property type="match status" value="1"/>
</dbReference>
<dbReference type="Gene3D" id="3.30.420.10">
    <property type="entry name" value="Ribonuclease H-like superfamily/Ribonuclease H"/>
    <property type="match status" value="1"/>
</dbReference>
<dbReference type="Gene3D" id="3.30.310.10">
    <property type="entry name" value="TATA-Binding Protein"/>
    <property type="match status" value="1"/>
</dbReference>
<dbReference type="HAMAP" id="MF_00053">
    <property type="entry name" value="RNase_HIII"/>
    <property type="match status" value="1"/>
</dbReference>
<dbReference type="InterPro" id="IPR001352">
    <property type="entry name" value="RNase_HII/HIII"/>
</dbReference>
<dbReference type="InterPro" id="IPR024567">
    <property type="entry name" value="RNase_HII/HIII_dom"/>
</dbReference>
<dbReference type="InterPro" id="IPR004641">
    <property type="entry name" value="RNase_HIII"/>
</dbReference>
<dbReference type="InterPro" id="IPR024568">
    <property type="entry name" value="RNase_HIII_N"/>
</dbReference>
<dbReference type="InterPro" id="IPR012337">
    <property type="entry name" value="RNaseH-like_sf"/>
</dbReference>
<dbReference type="InterPro" id="IPR036397">
    <property type="entry name" value="RNaseH_sf"/>
</dbReference>
<dbReference type="InterPro" id="IPR012295">
    <property type="entry name" value="TBP_dom_sf"/>
</dbReference>
<dbReference type="NCBIfam" id="TIGR00716">
    <property type="entry name" value="rnhC"/>
    <property type="match status" value="1"/>
</dbReference>
<dbReference type="PANTHER" id="PTHR10954:SF23">
    <property type="entry name" value="RIBONUCLEASE"/>
    <property type="match status" value="1"/>
</dbReference>
<dbReference type="PANTHER" id="PTHR10954">
    <property type="entry name" value="RIBONUCLEASE H2 SUBUNIT A"/>
    <property type="match status" value="1"/>
</dbReference>
<dbReference type="Pfam" id="PF11858">
    <property type="entry name" value="DUF3378"/>
    <property type="match status" value="1"/>
</dbReference>
<dbReference type="Pfam" id="PF01351">
    <property type="entry name" value="RNase_HII"/>
    <property type="match status" value="1"/>
</dbReference>
<dbReference type="PIRSF" id="PIRSF037748">
    <property type="entry name" value="RnhC"/>
    <property type="match status" value="1"/>
</dbReference>
<dbReference type="SUPFAM" id="SSF53098">
    <property type="entry name" value="Ribonuclease H-like"/>
    <property type="match status" value="1"/>
</dbReference>
<dbReference type="PROSITE" id="PS51975">
    <property type="entry name" value="RNASE_H_2"/>
    <property type="match status" value="1"/>
</dbReference>
<evidence type="ECO:0000250" key="1"/>
<evidence type="ECO:0000255" key="2">
    <source>
        <dbReference type="PROSITE-ProRule" id="PRU01319"/>
    </source>
</evidence>
<evidence type="ECO:0000305" key="3"/>
<reference key="1">
    <citation type="journal article" date="1999" name="Nat. Genet.">
        <title>Comparative genomes of Chlamydia pneumoniae and C. trachomatis.</title>
        <authorList>
            <person name="Kalman S."/>
            <person name="Mitchell W.P."/>
            <person name="Marathe R."/>
            <person name="Lammel C.J."/>
            <person name="Fan J."/>
            <person name="Hyman R.W."/>
            <person name="Olinger L."/>
            <person name="Grimwood J."/>
            <person name="Davis R.W."/>
            <person name="Stephens R.S."/>
        </authorList>
    </citation>
    <scope>NUCLEOTIDE SEQUENCE [LARGE SCALE GENOMIC DNA]</scope>
    <source>
        <strain>CWL029</strain>
    </source>
</reference>
<reference key="2">
    <citation type="journal article" date="2000" name="Nucleic Acids Res.">
        <title>Genome sequences of Chlamydia trachomatis MoPn and Chlamydia pneumoniae AR39.</title>
        <authorList>
            <person name="Read T.D."/>
            <person name="Brunham R.C."/>
            <person name="Shen C."/>
            <person name="Gill S.R."/>
            <person name="Heidelberg J.F."/>
            <person name="White O."/>
            <person name="Hickey E.K."/>
            <person name="Peterson J.D."/>
            <person name="Utterback T.R."/>
            <person name="Berry K.J."/>
            <person name="Bass S."/>
            <person name="Linher K.D."/>
            <person name="Weidman J.F."/>
            <person name="Khouri H.M."/>
            <person name="Craven B."/>
            <person name="Bowman C."/>
            <person name="Dodson R.J."/>
            <person name="Gwinn M.L."/>
            <person name="Nelson W.C."/>
            <person name="DeBoy R.T."/>
            <person name="Kolonay J.F."/>
            <person name="McClarty G."/>
            <person name="Salzberg S.L."/>
            <person name="Eisen J.A."/>
            <person name="Fraser C.M."/>
        </authorList>
    </citation>
    <scope>NUCLEOTIDE SEQUENCE [LARGE SCALE GENOMIC DNA]</scope>
    <source>
        <strain>AR39</strain>
    </source>
</reference>
<reference key="3">
    <citation type="journal article" date="2000" name="Nucleic Acids Res.">
        <title>Comparison of whole genome sequences of Chlamydia pneumoniae J138 from Japan and CWL029 from USA.</title>
        <authorList>
            <person name="Shirai M."/>
            <person name="Hirakawa H."/>
            <person name="Kimoto M."/>
            <person name="Tabuchi M."/>
            <person name="Kishi F."/>
            <person name="Ouchi K."/>
            <person name="Shiba T."/>
            <person name="Ishii K."/>
            <person name="Hattori M."/>
            <person name="Kuhara S."/>
            <person name="Nakazawa T."/>
        </authorList>
    </citation>
    <scope>NUCLEOTIDE SEQUENCE [LARGE SCALE GENOMIC DNA]</scope>
    <source>
        <strain>J138</strain>
    </source>
</reference>
<reference key="4">
    <citation type="submission" date="2002-05" db="EMBL/GenBank/DDBJ databases">
        <title>The genome sequence of Chlamydia pneumoniae TW183 and comparison with other Chlamydia strains based on whole genome sequence analysis.</title>
        <authorList>
            <person name="Geng M.M."/>
            <person name="Schuhmacher A."/>
            <person name="Muehldorfer I."/>
            <person name="Bensch K.W."/>
            <person name="Schaefer K.P."/>
            <person name="Schneider S."/>
            <person name="Pohl T."/>
            <person name="Essig A."/>
            <person name="Marre R."/>
            <person name="Melchers K."/>
        </authorList>
    </citation>
    <scope>NUCLEOTIDE SEQUENCE [LARGE SCALE GENOMIC DNA]</scope>
    <source>
        <strain>TW-183</strain>
    </source>
</reference>
<keyword id="KW-0963">Cytoplasm</keyword>
<keyword id="KW-0255">Endonuclease</keyword>
<keyword id="KW-0378">Hydrolase</keyword>
<keyword id="KW-0460">Magnesium</keyword>
<keyword id="KW-0479">Metal-binding</keyword>
<keyword id="KW-0540">Nuclease</keyword>
<accession>Q9Z6J1</accession>
<accession>Q9JQD2</accession>
<accession>Q9K1Y6</accession>
<sequence>MPPPFVVTLTTSAQNNLRDQLKEKNFIFSQPQNTVFQARSNTVTCTLYPSGKLVIQGKGSEEFIEFFLEPEILHTFTHARVEQDLRPRLGVDESGKGDFFGPLCIAAVYASNAEILKKLYENKVQDSKNLKDTKIASLARIIRSLCVCDVIILYPEKYNELYGKFQNLNTLLAWAHATVINNLAPKPAGDVFAISDQFAASEYTLLKALQKKETDITLIQKPRAEQDVVVAAASILARDAFVQSIQKLEEQYQVQLPKGAGFNVKAAGREIAKQRGKELLAKISKTHFKTFDEICSGK</sequence>
<comment type="function">
    <text evidence="1">Endonuclease that specifically degrades the RNA of RNA-DNA hybrids.</text>
</comment>
<comment type="catalytic activity">
    <reaction>
        <text>Endonucleolytic cleavage to 5'-phosphomonoester.</text>
        <dbReference type="EC" id="3.1.26.4"/>
    </reaction>
</comment>
<comment type="cofactor">
    <cofactor evidence="1">
        <name>Mn(2+)</name>
        <dbReference type="ChEBI" id="CHEBI:29035"/>
    </cofactor>
    <cofactor evidence="1">
        <name>Mg(2+)</name>
        <dbReference type="ChEBI" id="CHEBI:18420"/>
    </cofactor>
    <text evidence="1">Manganese or magnesium. Binds 1 divalent metal ion per monomer in the absence of substrate. May bind a second metal ion after substrate binding.</text>
</comment>
<comment type="subcellular location">
    <subcellularLocation>
        <location evidence="3">Cytoplasm</location>
    </subcellularLocation>
</comment>
<comment type="similarity">
    <text evidence="3">Belongs to the RNase HII family. RnhC subfamily.</text>
</comment>
<feature type="chain" id="PRO_0000111684" description="Ribonuclease HIII">
    <location>
        <begin position="1"/>
        <end position="298"/>
    </location>
</feature>
<feature type="domain" description="RNase H type-2" evidence="2">
    <location>
        <begin position="86"/>
        <end position="298"/>
    </location>
</feature>
<feature type="binding site" evidence="1">
    <location>
        <position position="92"/>
    </location>
    <ligand>
        <name>a divalent metal cation</name>
        <dbReference type="ChEBI" id="CHEBI:60240"/>
    </ligand>
</feature>
<feature type="binding site" evidence="1">
    <location>
        <position position="93"/>
    </location>
    <ligand>
        <name>a divalent metal cation</name>
        <dbReference type="ChEBI" id="CHEBI:60240"/>
    </ligand>
</feature>
<feature type="binding site" evidence="1">
    <location>
        <position position="196"/>
    </location>
    <ligand>
        <name>a divalent metal cation</name>
        <dbReference type="ChEBI" id="CHEBI:60240"/>
    </ligand>
</feature>
<protein>
    <recommendedName>
        <fullName>Ribonuclease HIII</fullName>
        <shortName>RNase HIII</shortName>
        <ecNumber>3.1.26.4</ecNumber>
    </recommendedName>
</protein>
<organism>
    <name type="scientific">Chlamydia pneumoniae</name>
    <name type="common">Chlamydophila pneumoniae</name>
    <dbReference type="NCBI Taxonomy" id="83558"/>
    <lineage>
        <taxon>Bacteria</taxon>
        <taxon>Pseudomonadati</taxon>
        <taxon>Chlamydiota</taxon>
        <taxon>Chlamydiia</taxon>
        <taxon>Chlamydiales</taxon>
        <taxon>Chlamydiaceae</taxon>
        <taxon>Chlamydia/Chlamydophila group</taxon>
        <taxon>Chlamydia</taxon>
    </lineage>
</organism>
<gene>
    <name type="primary">rnhC</name>
    <name type="ordered locus">CPn_1068</name>
    <name type="ordered locus">CP_0782</name>
    <name type="ordered locus">CpB1112</name>
</gene>